<gene>
    <name evidence="1" type="primary">ureB</name>
    <name type="ordered locus">Bamb_0780</name>
</gene>
<accession>Q0BHN4</accession>
<sequence>MIPGEILTDDGEHELNAGRPTLTVVVANTGDRPVQVGSHYHFFEANDALSFDRAAARGFRLNIAAGTAVRFEPGQTRTVELVELAGDRAVYGFQGKVMGPL</sequence>
<comment type="catalytic activity">
    <reaction evidence="1">
        <text>urea + 2 H2O + H(+) = hydrogencarbonate + 2 NH4(+)</text>
        <dbReference type="Rhea" id="RHEA:20557"/>
        <dbReference type="ChEBI" id="CHEBI:15377"/>
        <dbReference type="ChEBI" id="CHEBI:15378"/>
        <dbReference type="ChEBI" id="CHEBI:16199"/>
        <dbReference type="ChEBI" id="CHEBI:17544"/>
        <dbReference type="ChEBI" id="CHEBI:28938"/>
        <dbReference type="EC" id="3.5.1.5"/>
    </reaction>
</comment>
<comment type="pathway">
    <text evidence="1">Nitrogen metabolism; urea degradation; CO(2) and NH(3) from urea (urease route): step 1/1.</text>
</comment>
<comment type="subunit">
    <text evidence="1">Heterotrimer of UreA (gamma), UreB (beta) and UreC (alpha) subunits. Three heterotrimers associate to form the active enzyme.</text>
</comment>
<comment type="subcellular location">
    <subcellularLocation>
        <location evidence="1">Cytoplasm</location>
    </subcellularLocation>
</comment>
<comment type="similarity">
    <text evidence="1">Belongs to the urease beta subunit family.</text>
</comment>
<name>URE2_BURCM</name>
<protein>
    <recommendedName>
        <fullName evidence="1">Urease subunit beta</fullName>
        <ecNumber evidence="1">3.5.1.5</ecNumber>
    </recommendedName>
    <alternativeName>
        <fullName evidence="1">Urea amidohydrolase subunit beta</fullName>
    </alternativeName>
</protein>
<proteinExistence type="inferred from homology"/>
<dbReference type="EC" id="3.5.1.5" evidence="1"/>
<dbReference type="EMBL" id="CP000440">
    <property type="protein sequence ID" value="ABI86339.1"/>
    <property type="molecule type" value="Genomic_DNA"/>
</dbReference>
<dbReference type="RefSeq" id="WP_006752109.1">
    <property type="nucleotide sequence ID" value="NC_008390.1"/>
</dbReference>
<dbReference type="SMR" id="Q0BHN4"/>
<dbReference type="GeneID" id="93083812"/>
<dbReference type="KEGG" id="bam:Bamb_0780"/>
<dbReference type="PATRIC" id="fig|339670.21.peg.812"/>
<dbReference type="eggNOG" id="COG0832">
    <property type="taxonomic scope" value="Bacteria"/>
</dbReference>
<dbReference type="UniPathway" id="UPA00258">
    <property type="reaction ID" value="UER00370"/>
</dbReference>
<dbReference type="Proteomes" id="UP000000662">
    <property type="component" value="Chromosome 1"/>
</dbReference>
<dbReference type="GO" id="GO:0035550">
    <property type="term" value="C:urease complex"/>
    <property type="evidence" value="ECO:0007669"/>
    <property type="project" value="InterPro"/>
</dbReference>
<dbReference type="GO" id="GO:0009039">
    <property type="term" value="F:urease activity"/>
    <property type="evidence" value="ECO:0007669"/>
    <property type="project" value="UniProtKB-UniRule"/>
</dbReference>
<dbReference type="GO" id="GO:0043419">
    <property type="term" value="P:urea catabolic process"/>
    <property type="evidence" value="ECO:0007669"/>
    <property type="project" value="UniProtKB-UniRule"/>
</dbReference>
<dbReference type="CDD" id="cd00407">
    <property type="entry name" value="Urease_beta"/>
    <property type="match status" value="1"/>
</dbReference>
<dbReference type="FunFam" id="2.10.150.10:FF:000001">
    <property type="entry name" value="Urease subunit beta"/>
    <property type="match status" value="1"/>
</dbReference>
<dbReference type="Gene3D" id="2.10.150.10">
    <property type="entry name" value="Urease, beta subunit"/>
    <property type="match status" value="1"/>
</dbReference>
<dbReference type="HAMAP" id="MF_01954">
    <property type="entry name" value="Urease_beta"/>
    <property type="match status" value="1"/>
</dbReference>
<dbReference type="InterPro" id="IPR002019">
    <property type="entry name" value="Urease_beta-like"/>
</dbReference>
<dbReference type="InterPro" id="IPR036461">
    <property type="entry name" value="Urease_betasu_sf"/>
</dbReference>
<dbReference type="InterPro" id="IPR050069">
    <property type="entry name" value="Urease_subunit"/>
</dbReference>
<dbReference type="NCBIfam" id="NF009682">
    <property type="entry name" value="PRK13203.1"/>
    <property type="match status" value="1"/>
</dbReference>
<dbReference type="NCBIfam" id="TIGR00192">
    <property type="entry name" value="urease_beta"/>
    <property type="match status" value="1"/>
</dbReference>
<dbReference type="PANTHER" id="PTHR33569">
    <property type="entry name" value="UREASE"/>
    <property type="match status" value="1"/>
</dbReference>
<dbReference type="PANTHER" id="PTHR33569:SF1">
    <property type="entry name" value="UREASE"/>
    <property type="match status" value="1"/>
</dbReference>
<dbReference type="Pfam" id="PF00699">
    <property type="entry name" value="Urease_beta"/>
    <property type="match status" value="1"/>
</dbReference>
<dbReference type="SUPFAM" id="SSF51278">
    <property type="entry name" value="Urease, beta-subunit"/>
    <property type="match status" value="1"/>
</dbReference>
<feature type="chain" id="PRO_1000070721" description="Urease subunit beta">
    <location>
        <begin position="1"/>
        <end position="101"/>
    </location>
</feature>
<evidence type="ECO:0000255" key="1">
    <source>
        <dbReference type="HAMAP-Rule" id="MF_01954"/>
    </source>
</evidence>
<keyword id="KW-0963">Cytoplasm</keyword>
<keyword id="KW-0378">Hydrolase</keyword>
<reference key="1">
    <citation type="submission" date="2006-08" db="EMBL/GenBank/DDBJ databases">
        <title>Complete sequence of chromosome 1 of Burkholderia cepacia AMMD.</title>
        <authorList>
            <person name="Copeland A."/>
            <person name="Lucas S."/>
            <person name="Lapidus A."/>
            <person name="Barry K."/>
            <person name="Detter J.C."/>
            <person name="Glavina del Rio T."/>
            <person name="Hammon N."/>
            <person name="Israni S."/>
            <person name="Pitluck S."/>
            <person name="Bruce D."/>
            <person name="Chain P."/>
            <person name="Malfatti S."/>
            <person name="Shin M."/>
            <person name="Vergez L."/>
            <person name="Schmutz J."/>
            <person name="Larimer F."/>
            <person name="Land M."/>
            <person name="Hauser L."/>
            <person name="Kyrpides N."/>
            <person name="Kim E."/>
            <person name="Parke J."/>
            <person name="Coenye T."/>
            <person name="Konstantinidis K."/>
            <person name="Ramette A."/>
            <person name="Tiedje J."/>
            <person name="Richardson P."/>
        </authorList>
    </citation>
    <scope>NUCLEOTIDE SEQUENCE [LARGE SCALE GENOMIC DNA]</scope>
    <source>
        <strain>ATCC BAA-244 / DSM 16087 / CCUG 44356 / LMG 19182 / AMMD</strain>
    </source>
</reference>
<organism>
    <name type="scientific">Burkholderia ambifaria (strain ATCC BAA-244 / DSM 16087 / CCUG 44356 / LMG 19182 / AMMD)</name>
    <name type="common">Burkholderia cepacia (strain AMMD)</name>
    <dbReference type="NCBI Taxonomy" id="339670"/>
    <lineage>
        <taxon>Bacteria</taxon>
        <taxon>Pseudomonadati</taxon>
        <taxon>Pseudomonadota</taxon>
        <taxon>Betaproteobacteria</taxon>
        <taxon>Burkholderiales</taxon>
        <taxon>Burkholderiaceae</taxon>
        <taxon>Burkholderia</taxon>
        <taxon>Burkholderia cepacia complex</taxon>
    </lineage>
</organism>